<name>DCDB_HALOH</name>
<keyword id="KW-0378">Hydrolase</keyword>
<keyword id="KW-0546">Nucleotide metabolism</keyword>
<keyword id="KW-0547">Nucleotide-binding</keyword>
<keyword id="KW-1185">Reference proteome</keyword>
<gene>
    <name evidence="1" type="primary">dcd</name>
    <name type="ordered locus">Hore_01700</name>
</gene>
<reference key="1">
    <citation type="journal article" date="2009" name="PLoS ONE">
        <title>Genome analysis of the anaerobic thermohalophilic bacterium Halothermothrix orenii.</title>
        <authorList>
            <person name="Mavromatis K."/>
            <person name="Ivanova N."/>
            <person name="Anderson I."/>
            <person name="Lykidis A."/>
            <person name="Hooper S.D."/>
            <person name="Sun H."/>
            <person name="Kunin V."/>
            <person name="Lapidus A."/>
            <person name="Hugenholtz P."/>
            <person name="Patel B."/>
            <person name="Kyrpides N.C."/>
        </authorList>
    </citation>
    <scope>NUCLEOTIDE SEQUENCE [LARGE SCALE GENOMIC DNA]</scope>
    <source>
        <strain>H 168 / OCM 544 / DSM 9562</strain>
    </source>
</reference>
<organism>
    <name type="scientific">Halothermothrix orenii (strain H 168 / OCM 544 / DSM 9562)</name>
    <dbReference type="NCBI Taxonomy" id="373903"/>
    <lineage>
        <taxon>Bacteria</taxon>
        <taxon>Bacillati</taxon>
        <taxon>Bacillota</taxon>
        <taxon>Clostridia</taxon>
        <taxon>Halanaerobiales</taxon>
        <taxon>Halothermotrichaceae</taxon>
        <taxon>Halothermothrix</taxon>
    </lineage>
</organism>
<protein>
    <recommendedName>
        <fullName evidence="1">dCTP deaminase, dUMP-forming</fullName>
        <ecNumber evidence="1">3.5.4.30</ecNumber>
    </recommendedName>
    <alternativeName>
        <fullName evidence="1">Bifunctional dCTP deaminase:dUTPase</fullName>
    </alternativeName>
    <alternativeName>
        <fullName evidence="1">DCD-DUT</fullName>
    </alternativeName>
</protein>
<sequence length="182" mass="20853">MILSDRTINQMIKNGELVVEPLEEYQIQPASIDLRLGSSFLKIDENLMEVMTLNDEIKYVNLERKEIIVPPNSFLLATTREYIKLPPDITAFVEGRSSIGRMGLFIQNAGWVDPGFEGQITLELYNANRLPIKLTAGRRICQLVLARMDKEAKTPYQGKYLYQKKAVGSRVYQDLENKQNKN</sequence>
<feature type="chain" id="PRO_1000123149" description="dCTP deaminase, dUMP-forming">
    <location>
        <begin position="1"/>
        <end position="182"/>
    </location>
</feature>
<feature type="active site" description="Proton donor/acceptor" evidence="1">
    <location>
        <position position="123"/>
    </location>
</feature>
<feature type="binding site" evidence="1">
    <location>
        <begin position="96"/>
        <end position="101"/>
    </location>
    <ligand>
        <name>dCTP</name>
        <dbReference type="ChEBI" id="CHEBI:61481"/>
    </ligand>
</feature>
<feature type="binding site" evidence="1">
    <location>
        <position position="113"/>
    </location>
    <ligand>
        <name>dCTP</name>
        <dbReference type="ChEBI" id="CHEBI:61481"/>
    </ligand>
</feature>
<feature type="binding site" evidence="1">
    <location>
        <begin position="121"/>
        <end position="123"/>
    </location>
    <ligand>
        <name>dCTP</name>
        <dbReference type="ChEBI" id="CHEBI:61481"/>
    </ligand>
</feature>
<feature type="binding site" evidence="1">
    <location>
        <position position="142"/>
    </location>
    <ligand>
        <name>dCTP</name>
        <dbReference type="ChEBI" id="CHEBI:61481"/>
    </ligand>
</feature>
<feature type="binding site" evidence="1">
    <location>
        <position position="156"/>
    </location>
    <ligand>
        <name>dCTP</name>
        <dbReference type="ChEBI" id="CHEBI:61481"/>
    </ligand>
</feature>
<feature type="binding site" evidence="1">
    <location>
        <position position="163"/>
    </location>
    <ligand>
        <name>dCTP</name>
        <dbReference type="ChEBI" id="CHEBI:61481"/>
    </ligand>
</feature>
<feature type="site" description="Important for bifunctional activity" evidence="1">
    <location>
        <begin position="110"/>
        <end position="111"/>
    </location>
</feature>
<dbReference type="EC" id="3.5.4.30" evidence="1"/>
<dbReference type="EMBL" id="CP001098">
    <property type="protein sequence ID" value="ACL68932.1"/>
    <property type="molecule type" value="Genomic_DNA"/>
</dbReference>
<dbReference type="RefSeq" id="WP_012635130.1">
    <property type="nucleotide sequence ID" value="NC_011899.1"/>
</dbReference>
<dbReference type="SMR" id="B8D0W3"/>
<dbReference type="STRING" id="373903.Hore_01700"/>
<dbReference type="KEGG" id="hor:Hore_01700"/>
<dbReference type="eggNOG" id="COG0717">
    <property type="taxonomic scope" value="Bacteria"/>
</dbReference>
<dbReference type="HOGENOM" id="CLU_087476_2_1_9"/>
<dbReference type="OrthoDB" id="9780202at2"/>
<dbReference type="UniPathway" id="UPA00610">
    <property type="reaction ID" value="UER00667"/>
</dbReference>
<dbReference type="Proteomes" id="UP000000719">
    <property type="component" value="Chromosome"/>
</dbReference>
<dbReference type="GO" id="GO:0033973">
    <property type="term" value="F:dCTP deaminase (dUMP-forming) activity"/>
    <property type="evidence" value="ECO:0007669"/>
    <property type="project" value="UniProtKB-UniRule"/>
</dbReference>
<dbReference type="GO" id="GO:0008829">
    <property type="term" value="F:dCTP deaminase activity"/>
    <property type="evidence" value="ECO:0007669"/>
    <property type="project" value="InterPro"/>
</dbReference>
<dbReference type="GO" id="GO:0000166">
    <property type="term" value="F:nucleotide binding"/>
    <property type="evidence" value="ECO:0007669"/>
    <property type="project" value="UniProtKB-KW"/>
</dbReference>
<dbReference type="GO" id="GO:0006226">
    <property type="term" value="P:dUMP biosynthetic process"/>
    <property type="evidence" value="ECO:0007669"/>
    <property type="project" value="UniProtKB-UniRule"/>
</dbReference>
<dbReference type="GO" id="GO:0006229">
    <property type="term" value="P:dUTP biosynthetic process"/>
    <property type="evidence" value="ECO:0007669"/>
    <property type="project" value="InterPro"/>
</dbReference>
<dbReference type="GO" id="GO:0015949">
    <property type="term" value="P:nucleobase-containing small molecule interconversion"/>
    <property type="evidence" value="ECO:0007669"/>
    <property type="project" value="TreeGrafter"/>
</dbReference>
<dbReference type="CDD" id="cd07557">
    <property type="entry name" value="trimeric_dUTPase"/>
    <property type="match status" value="1"/>
</dbReference>
<dbReference type="Gene3D" id="2.70.40.10">
    <property type="match status" value="1"/>
</dbReference>
<dbReference type="HAMAP" id="MF_00146">
    <property type="entry name" value="dCTP_deaminase"/>
    <property type="match status" value="1"/>
</dbReference>
<dbReference type="InterPro" id="IPR011962">
    <property type="entry name" value="dCTP_deaminase"/>
</dbReference>
<dbReference type="InterPro" id="IPR036157">
    <property type="entry name" value="dUTPase-like_sf"/>
</dbReference>
<dbReference type="InterPro" id="IPR033704">
    <property type="entry name" value="dUTPase_trimeric"/>
</dbReference>
<dbReference type="NCBIfam" id="TIGR02274">
    <property type="entry name" value="dCTP_deam"/>
    <property type="match status" value="1"/>
</dbReference>
<dbReference type="PANTHER" id="PTHR42680">
    <property type="entry name" value="DCTP DEAMINASE"/>
    <property type="match status" value="1"/>
</dbReference>
<dbReference type="PANTHER" id="PTHR42680:SF3">
    <property type="entry name" value="DCTP DEAMINASE"/>
    <property type="match status" value="1"/>
</dbReference>
<dbReference type="Pfam" id="PF22769">
    <property type="entry name" value="DCD"/>
    <property type="match status" value="1"/>
</dbReference>
<dbReference type="SUPFAM" id="SSF51283">
    <property type="entry name" value="dUTPase-like"/>
    <property type="match status" value="1"/>
</dbReference>
<evidence type="ECO:0000255" key="1">
    <source>
        <dbReference type="HAMAP-Rule" id="MF_00146"/>
    </source>
</evidence>
<comment type="function">
    <text evidence="1">Bifunctional enzyme that catalyzes both the deamination of dCTP to dUTP and the hydrolysis of dUTP to dUMP without releasing the toxic dUTP intermediate.</text>
</comment>
<comment type="catalytic activity">
    <reaction evidence="1">
        <text>dCTP + 2 H2O = dUMP + NH4(+) + diphosphate</text>
        <dbReference type="Rhea" id="RHEA:19205"/>
        <dbReference type="ChEBI" id="CHEBI:15377"/>
        <dbReference type="ChEBI" id="CHEBI:28938"/>
        <dbReference type="ChEBI" id="CHEBI:33019"/>
        <dbReference type="ChEBI" id="CHEBI:61481"/>
        <dbReference type="ChEBI" id="CHEBI:246422"/>
        <dbReference type="EC" id="3.5.4.30"/>
    </reaction>
</comment>
<comment type="pathway">
    <text evidence="1">Pyrimidine metabolism; dUMP biosynthesis; dUMP from dCTP: step 1/1.</text>
</comment>
<comment type="subunit">
    <text evidence="1">Homotrimer.</text>
</comment>
<comment type="similarity">
    <text evidence="1">Belongs to the dCTP deaminase family.</text>
</comment>
<accession>B8D0W3</accession>
<proteinExistence type="inferred from homology"/>